<feature type="chain" id="PRO_1000116689" description="Elongation factor Ts">
    <location>
        <begin position="1"/>
        <end position="295"/>
    </location>
</feature>
<feature type="region of interest" description="Involved in Mg(2+) ion dislocation from EF-Tu" evidence="1">
    <location>
        <begin position="79"/>
        <end position="82"/>
    </location>
</feature>
<protein>
    <recommendedName>
        <fullName evidence="1">Elongation factor Ts</fullName>
        <shortName evidence="1">EF-Ts</shortName>
    </recommendedName>
</protein>
<dbReference type="EMBL" id="CP001186">
    <property type="protein sequence ID" value="ACK95568.1"/>
    <property type="molecule type" value="Genomic_DNA"/>
</dbReference>
<dbReference type="RefSeq" id="WP_001018576.1">
    <property type="nucleotide sequence ID" value="NC_011772.1"/>
</dbReference>
<dbReference type="SMR" id="B7IUI5"/>
<dbReference type="KEGG" id="bcg:BCG9842_B1319"/>
<dbReference type="HOGENOM" id="CLU_047155_0_2_9"/>
<dbReference type="Proteomes" id="UP000006744">
    <property type="component" value="Chromosome"/>
</dbReference>
<dbReference type="GO" id="GO:0005737">
    <property type="term" value="C:cytoplasm"/>
    <property type="evidence" value="ECO:0007669"/>
    <property type="project" value="UniProtKB-SubCell"/>
</dbReference>
<dbReference type="GO" id="GO:0003746">
    <property type="term" value="F:translation elongation factor activity"/>
    <property type="evidence" value="ECO:0007669"/>
    <property type="project" value="UniProtKB-UniRule"/>
</dbReference>
<dbReference type="CDD" id="cd14275">
    <property type="entry name" value="UBA_EF-Ts"/>
    <property type="match status" value="1"/>
</dbReference>
<dbReference type="FunFam" id="1.10.286.20:FF:000003">
    <property type="entry name" value="Elongation factor Ts"/>
    <property type="match status" value="1"/>
</dbReference>
<dbReference type="FunFam" id="1.10.8.10:FF:000001">
    <property type="entry name" value="Elongation factor Ts"/>
    <property type="match status" value="1"/>
</dbReference>
<dbReference type="FunFam" id="3.30.479.20:FF:000005">
    <property type="entry name" value="Elongation factor Ts"/>
    <property type="match status" value="1"/>
</dbReference>
<dbReference type="Gene3D" id="1.10.286.20">
    <property type="match status" value="1"/>
</dbReference>
<dbReference type="Gene3D" id="1.10.8.10">
    <property type="entry name" value="DNA helicase RuvA subunit, C-terminal domain"/>
    <property type="match status" value="1"/>
</dbReference>
<dbReference type="Gene3D" id="3.30.479.20">
    <property type="entry name" value="Elongation factor Ts, dimerisation domain"/>
    <property type="match status" value="2"/>
</dbReference>
<dbReference type="HAMAP" id="MF_00050">
    <property type="entry name" value="EF_Ts"/>
    <property type="match status" value="1"/>
</dbReference>
<dbReference type="InterPro" id="IPR036402">
    <property type="entry name" value="EF-Ts_dimer_sf"/>
</dbReference>
<dbReference type="InterPro" id="IPR001816">
    <property type="entry name" value="Transl_elong_EFTs/EF1B"/>
</dbReference>
<dbReference type="InterPro" id="IPR014039">
    <property type="entry name" value="Transl_elong_EFTs/EF1B_dimer"/>
</dbReference>
<dbReference type="InterPro" id="IPR018101">
    <property type="entry name" value="Transl_elong_Ts_CS"/>
</dbReference>
<dbReference type="InterPro" id="IPR009060">
    <property type="entry name" value="UBA-like_sf"/>
</dbReference>
<dbReference type="NCBIfam" id="TIGR00116">
    <property type="entry name" value="tsf"/>
    <property type="match status" value="1"/>
</dbReference>
<dbReference type="PANTHER" id="PTHR11741">
    <property type="entry name" value="ELONGATION FACTOR TS"/>
    <property type="match status" value="1"/>
</dbReference>
<dbReference type="PANTHER" id="PTHR11741:SF0">
    <property type="entry name" value="ELONGATION FACTOR TS, MITOCHONDRIAL"/>
    <property type="match status" value="1"/>
</dbReference>
<dbReference type="Pfam" id="PF00889">
    <property type="entry name" value="EF_TS"/>
    <property type="match status" value="1"/>
</dbReference>
<dbReference type="SUPFAM" id="SSF54713">
    <property type="entry name" value="Elongation factor Ts (EF-Ts), dimerisation domain"/>
    <property type="match status" value="2"/>
</dbReference>
<dbReference type="SUPFAM" id="SSF46934">
    <property type="entry name" value="UBA-like"/>
    <property type="match status" value="1"/>
</dbReference>
<dbReference type="PROSITE" id="PS01126">
    <property type="entry name" value="EF_TS_1"/>
    <property type="match status" value="1"/>
</dbReference>
<dbReference type="PROSITE" id="PS01127">
    <property type="entry name" value="EF_TS_2"/>
    <property type="match status" value="1"/>
</dbReference>
<keyword id="KW-0963">Cytoplasm</keyword>
<keyword id="KW-0251">Elongation factor</keyword>
<keyword id="KW-0648">Protein biosynthesis</keyword>
<gene>
    <name evidence="1" type="primary">tsf</name>
    <name type="ordered locus">BCG9842_B1319</name>
</gene>
<evidence type="ECO:0000255" key="1">
    <source>
        <dbReference type="HAMAP-Rule" id="MF_00050"/>
    </source>
</evidence>
<sequence>MAITAQMVKELREKTGAGMMDCKKALTETNGDMEKAIDFLREKGIAKAAKKADRIAAEGLTFIETNGNDALILELNSETDFVAKNEGFQALIKELAAHLLANKPANVEEAMTQTIEGGKTVEEHINEAIAKIGEKLTLRRFEIVSKTDADAFGAYLHMGGRIGVLTVLEGSTDEAAAKDVAMHIAAVNPKYIDRDAVTAEEVEHERQVLTQQALNEGKPEKIVAKMVEGRLGKFFEEICLLDQAFVKNPDMKVRQFVESKGGTLKGFVRYAVGEGIEKREDNFAEEVMNQVKGSN</sequence>
<organism>
    <name type="scientific">Bacillus cereus (strain G9842)</name>
    <dbReference type="NCBI Taxonomy" id="405531"/>
    <lineage>
        <taxon>Bacteria</taxon>
        <taxon>Bacillati</taxon>
        <taxon>Bacillota</taxon>
        <taxon>Bacilli</taxon>
        <taxon>Bacillales</taxon>
        <taxon>Bacillaceae</taxon>
        <taxon>Bacillus</taxon>
        <taxon>Bacillus cereus group</taxon>
    </lineage>
</organism>
<reference key="1">
    <citation type="submission" date="2008-10" db="EMBL/GenBank/DDBJ databases">
        <title>Genome sequence of Bacillus cereus G9842.</title>
        <authorList>
            <person name="Dodson R.J."/>
            <person name="Durkin A.S."/>
            <person name="Rosovitz M.J."/>
            <person name="Rasko D.A."/>
            <person name="Hoffmaster A."/>
            <person name="Ravel J."/>
            <person name="Sutton G."/>
        </authorList>
    </citation>
    <scope>NUCLEOTIDE SEQUENCE [LARGE SCALE GENOMIC DNA]</scope>
    <source>
        <strain>G9842</strain>
    </source>
</reference>
<accession>B7IUI5</accession>
<comment type="function">
    <text evidence="1">Associates with the EF-Tu.GDP complex and induces the exchange of GDP to GTP. It remains bound to the aminoacyl-tRNA.EF-Tu.GTP complex up to the GTP hydrolysis stage on the ribosome.</text>
</comment>
<comment type="subcellular location">
    <subcellularLocation>
        <location evidence="1">Cytoplasm</location>
    </subcellularLocation>
</comment>
<comment type="similarity">
    <text evidence="1">Belongs to the EF-Ts family.</text>
</comment>
<proteinExistence type="inferred from homology"/>
<name>EFTS_BACC2</name>